<accession>A3PBC8</accession>
<proteinExistence type="inferred from homology"/>
<sequence>MFKTINKSITSILLLLISFYQKWFSPFFGPRCRFIPSCSSYGYEAITRHGPWKGGWLTLKRLSRCHPLTPCGCDPVPD</sequence>
<name>YIDD_PROM0</name>
<keyword id="KW-0997">Cell inner membrane</keyword>
<keyword id="KW-1003">Cell membrane</keyword>
<keyword id="KW-0472">Membrane</keyword>
<keyword id="KW-1185">Reference proteome</keyword>
<gene>
    <name type="ordered locus">P9301_04301</name>
</gene>
<reference key="1">
    <citation type="journal article" date="2007" name="PLoS Genet.">
        <title>Patterns and implications of gene gain and loss in the evolution of Prochlorococcus.</title>
        <authorList>
            <person name="Kettler G.C."/>
            <person name="Martiny A.C."/>
            <person name="Huang K."/>
            <person name="Zucker J."/>
            <person name="Coleman M.L."/>
            <person name="Rodrigue S."/>
            <person name="Chen F."/>
            <person name="Lapidus A."/>
            <person name="Ferriera S."/>
            <person name="Johnson J."/>
            <person name="Steglich C."/>
            <person name="Church G.M."/>
            <person name="Richardson P."/>
            <person name="Chisholm S.W."/>
        </authorList>
    </citation>
    <scope>NUCLEOTIDE SEQUENCE [LARGE SCALE GENOMIC DNA]</scope>
    <source>
        <strain>MIT 9301</strain>
    </source>
</reference>
<organism>
    <name type="scientific">Prochlorococcus marinus (strain MIT 9301)</name>
    <dbReference type="NCBI Taxonomy" id="167546"/>
    <lineage>
        <taxon>Bacteria</taxon>
        <taxon>Bacillati</taxon>
        <taxon>Cyanobacteriota</taxon>
        <taxon>Cyanophyceae</taxon>
        <taxon>Synechococcales</taxon>
        <taxon>Prochlorococcaceae</taxon>
        <taxon>Prochlorococcus</taxon>
    </lineage>
</organism>
<protein>
    <recommendedName>
        <fullName evidence="1">Putative membrane protein insertion efficiency factor</fullName>
    </recommendedName>
</protein>
<feature type="chain" id="PRO_1000013109" description="Putative membrane protein insertion efficiency factor">
    <location>
        <begin position="1"/>
        <end position="78"/>
    </location>
</feature>
<comment type="function">
    <text evidence="1">Could be involved in insertion of integral membrane proteins into the membrane.</text>
</comment>
<comment type="subcellular location">
    <subcellularLocation>
        <location evidence="1">Cell inner membrane</location>
        <topology evidence="1">Peripheral membrane protein</topology>
        <orientation evidence="1">Cytoplasmic side</orientation>
    </subcellularLocation>
</comment>
<comment type="similarity">
    <text evidence="1">Belongs to the UPF0161 family.</text>
</comment>
<evidence type="ECO:0000255" key="1">
    <source>
        <dbReference type="HAMAP-Rule" id="MF_00386"/>
    </source>
</evidence>
<dbReference type="EMBL" id="CP000576">
    <property type="protein sequence ID" value="ABO17053.1"/>
    <property type="molecule type" value="Genomic_DNA"/>
</dbReference>
<dbReference type="STRING" id="167546.P9301_04301"/>
<dbReference type="KEGG" id="pmg:P9301_04301"/>
<dbReference type="eggNOG" id="COG0759">
    <property type="taxonomic scope" value="Bacteria"/>
</dbReference>
<dbReference type="HOGENOM" id="CLU_144811_6_0_3"/>
<dbReference type="OrthoDB" id="9801753at2"/>
<dbReference type="Proteomes" id="UP000001430">
    <property type="component" value="Chromosome"/>
</dbReference>
<dbReference type="GO" id="GO:0005886">
    <property type="term" value="C:plasma membrane"/>
    <property type="evidence" value="ECO:0007669"/>
    <property type="project" value="UniProtKB-SubCell"/>
</dbReference>
<dbReference type="HAMAP" id="MF_00386">
    <property type="entry name" value="UPF0161_YidD"/>
    <property type="match status" value="1"/>
</dbReference>
<dbReference type="InterPro" id="IPR002696">
    <property type="entry name" value="Membr_insert_effic_factor_YidD"/>
</dbReference>
<dbReference type="NCBIfam" id="TIGR00278">
    <property type="entry name" value="membrane protein insertion efficiency factor YidD"/>
    <property type="match status" value="1"/>
</dbReference>
<dbReference type="PANTHER" id="PTHR33383">
    <property type="entry name" value="MEMBRANE PROTEIN INSERTION EFFICIENCY FACTOR-RELATED"/>
    <property type="match status" value="1"/>
</dbReference>
<dbReference type="PANTHER" id="PTHR33383:SF1">
    <property type="entry name" value="MEMBRANE PROTEIN INSERTION EFFICIENCY FACTOR-RELATED"/>
    <property type="match status" value="1"/>
</dbReference>
<dbReference type="Pfam" id="PF01809">
    <property type="entry name" value="YidD"/>
    <property type="match status" value="1"/>
</dbReference>
<dbReference type="SMART" id="SM01234">
    <property type="entry name" value="Haemolytic"/>
    <property type="match status" value="1"/>
</dbReference>